<comment type="similarity">
    <text evidence="2">Belongs to the nepovirus satellite RNA 48 kDa protein family.</text>
</comment>
<dbReference type="EMBL" id="X05688">
    <property type="protein sequence ID" value="CAB59631.1"/>
    <property type="molecule type" value="Genomic_RNA"/>
</dbReference>
<dbReference type="PIR" id="B27169">
    <property type="entry name" value="SAVVTE"/>
</dbReference>
<dbReference type="InterPro" id="IPR035312">
    <property type="entry name" value="SatRNA_48"/>
</dbReference>
<dbReference type="Pfam" id="PF17485">
    <property type="entry name" value="SatRNA_48"/>
    <property type="match status" value="1"/>
</dbReference>
<accession>P22049</accession>
<feature type="chain" id="PRO_0000105577" description="Satellite RNA 48 kDa protein">
    <location>
        <begin position="1"/>
        <end position="419"/>
    </location>
</feature>
<feature type="region of interest" description="Disordered" evidence="1">
    <location>
        <begin position="1"/>
        <end position="66"/>
    </location>
</feature>
<feature type="compositionally biased region" description="Basic residues" evidence="1">
    <location>
        <begin position="1"/>
        <end position="27"/>
    </location>
</feature>
<sequence>MQKTMTRHLSRNRKPHEKVSHVPRRGPRTYQDPCDPGWYVVNSRRGVAPQPTPTSGSLGRKPYNPGCPSRKWTKKIIAAPKHGFYSAKDHGYWVPKVQAQKKYNPPRKVVGGGRSYKDVLSTPAKIQIKPTPESILLAQKIQNSTFKSRGKVTLSQEKIPLINRFQELLIEKELMEDVEESQPFVANDSRAQHLFCKKVLRKVGRREILVCPITNEESHVNLKTGIKARIVDSMGSVVHEENIPAYNRGHVVKSMRKRIVHERESKPIPVIGSFSDRAIRVLCDDHTDELASASSVPSEWKPSKNQRAVPCLLQNESATVVSAKPDWYAPVKVCTHKQYMKVQRVFLDAMFIMRALRFHIDAKILRETWVKCWLQVHRKNVAFPGWMIAPLLSGTVPCEQEFLLPRVNETRAFATVCYA</sequence>
<proteinExistence type="inferred from homology"/>
<name>VS48_TBRVE</name>
<protein>
    <recommendedName>
        <fullName>Satellite RNA 48 kDa protein</fullName>
    </recommendedName>
</protein>
<organismHost>
    <name type="scientific">Allium porrum</name>
    <name type="common">Leek</name>
    <name type="synonym">Allium ampeloprasum var. porrum</name>
    <dbReference type="NCBI Taxonomy" id="4681"/>
</organismHost>
<organismHost>
    <name type="scientific">Apium graveolens</name>
    <name type="common">Celery</name>
    <dbReference type="NCBI Taxonomy" id="4045"/>
</organismHost>
<organismHost>
    <name type="scientific">Beta vulgaris</name>
    <name type="common">Sugar beet</name>
    <dbReference type="NCBI Taxonomy" id="161934"/>
</organismHost>
<organismHost>
    <name type="scientific">Fraxinus</name>
    <name type="common">ash trees</name>
    <dbReference type="NCBI Taxonomy" id="38871"/>
</organismHost>
<organismHost>
    <name type="scientific">Lactuca sativa</name>
    <name type="common">Garden lettuce</name>
    <dbReference type="NCBI Taxonomy" id="4236"/>
</organismHost>
<organismHost>
    <name type="scientific">Narcissus pseudonarcissus</name>
    <name type="common">Daffodil</name>
    <dbReference type="NCBI Taxonomy" id="39639"/>
</organismHost>
<organismHost>
    <name type="scientific">Phaseolus vulgaris</name>
    <name type="common">Kidney bean</name>
    <name type="synonym">French bean</name>
    <dbReference type="NCBI Taxonomy" id="3885"/>
</organismHost>
<organismHost>
    <name type="scientific">Robinia pseudoacacia</name>
    <name type="common">Black locust</name>
    <dbReference type="NCBI Taxonomy" id="35938"/>
</organismHost>
<organismHost>
    <name type="scientific">Rubus</name>
    <name type="common">bramble</name>
    <dbReference type="NCBI Taxonomy" id="23216"/>
</organismHost>
<organismHost>
    <name type="scientific">Solanum lycopersicum</name>
    <name type="common">Tomato</name>
    <name type="synonym">Lycopersicon esculentum</name>
    <dbReference type="NCBI Taxonomy" id="4081"/>
</organismHost>
<organismHost>
    <name type="scientific">Solanum tuberosum</name>
    <name type="common">Potato</name>
    <dbReference type="NCBI Taxonomy" id="4113"/>
</organismHost>
<organismHost>
    <name type="scientific">Tulipa</name>
    <dbReference type="NCBI Taxonomy" id="13305"/>
</organismHost>
<organismHost>
    <name type="scientific">Vitis</name>
    <dbReference type="NCBI Taxonomy" id="3603"/>
</organismHost>
<organism>
    <name type="scientific">Tomato black ring virus (strain E)</name>
    <name type="common">TBRV</name>
    <dbReference type="NCBI Taxonomy" id="12277"/>
    <lineage>
        <taxon>Viruses</taxon>
        <taxon>Riboviria</taxon>
        <taxon>Orthornavirae</taxon>
        <taxon>Pisuviricota</taxon>
        <taxon>Pisoniviricetes</taxon>
        <taxon>Picornavirales</taxon>
        <taxon>Secoviridae</taxon>
        <taxon>Comovirinae</taxon>
        <taxon>Nepovirus</taxon>
        <taxon>Nepovirus betae</taxon>
    </lineage>
</organism>
<evidence type="ECO:0000256" key="1">
    <source>
        <dbReference type="SAM" id="MobiDB-lite"/>
    </source>
</evidence>
<evidence type="ECO:0000305" key="2"/>
<reference key="1">
    <citation type="journal article" date="1987" name="J. Gen. Virol.">
        <title>Comparison of the nucleotide sequences of five tomato black ring virus satellite RNAs.</title>
        <authorList>
            <person name="Hemmer O."/>
            <person name="Meyer M."/>
            <person name="Greif C."/>
            <person name="Fritsch C."/>
        </authorList>
    </citation>
    <scope>NUCLEOTIDE SEQUENCE [GENOMIC RNA]</scope>
</reference>
<reference key="2">
    <citation type="submission" date="1988-02" db="EMBL/GenBank/DDBJ databases">
        <authorList>
            <person name="Fritsch C."/>
        </authorList>
    </citation>
    <scope>SEQUENCE REVISION</scope>
</reference>